<keyword id="KW-0687">Ribonucleoprotein</keyword>
<keyword id="KW-0689">Ribosomal protein</keyword>
<reference key="1">
    <citation type="submission" date="2007-05" db="EMBL/GenBank/DDBJ databases">
        <title>Complete sequence of Dehalococcoides sp. BAV1.</title>
        <authorList>
            <consortium name="US DOE Joint Genome Institute"/>
            <person name="Copeland A."/>
            <person name="Lucas S."/>
            <person name="Lapidus A."/>
            <person name="Barry K."/>
            <person name="Detter J.C."/>
            <person name="Glavina del Rio T."/>
            <person name="Hammon N."/>
            <person name="Israni S."/>
            <person name="Pitluck S."/>
            <person name="Lowry S."/>
            <person name="Clum A."/>
            <person name="Schmutz J."/>
            <person name="Larimer F."/>
            <person name="Land M."/>
            <person name="Hauser L."/>
            <person name="Kyrpides N."/>
            <person name="Kim E."/>
            <person name="Ritalahti K.M."/>
            <person name="Loeffler F."/>
            <person name="Richardson P."/>
        </authorList>
    </citation>
    <scope>NUCLEOTIDE SEQUENCE [LARGE SCALE GENOMIC DNA]</scope>
    <source>
        <strain>ATCC BAA-2100 / JCM 16839 / KCTC 5957 / BAV1</strain>
    </source>
</reference>
<sequence>MAHKKGAGSTKNGRDSKPKMLGVKRFAGEKVNSGTIIVRQRGTHIHPGENVGLGRDYTIFATCEGVVKFEPTTNDRRKVSVVAD</sequence>
<comment type="similarity">
    <text evidence="1">Belongs to the bacterial ribosomal protein bL27 family.</text>
</comment>
<gene>
    <name evidence="1" type="primary">rpmA</name>
    <name type="ordered locus">DehaBAV1_1137</name>
</gene>
<feature type="chain" id="PRO_1000081886" description="Large ribosomal subunit protein bL27">
    <location>
        <begin position="1"/>
        <end position="84"/>
    </location>
</feature>
<feature type="region of interest" description="Disordered" evidence="2">
    <location>
        <begin position="1"/>
        <end position="21"/>
    </location>
</feature>
<protein>
    <recommendedName>
        <fullName evidence="1">Large ribosomal subunit protein bL27</fullName>
    </recommendedName>
    <alternativeName>
        <fullName evidence="3">50S ribosomal protein L27</fullName>
    </alternativeName>
</protein>
<organism>
    <name type="scientific">Dehalococcoides mccartyi (strain ATCC BAA-2100 / JCM 16839 / KCTC 5957 / BAV1)</name>
    <dbReference type="NCBI Taxonomy" id="216389"/>
    <lineage>
        <taxon>Bacteria</taxon>
        <taxon>Bacillati</taxon>
        <taxon>Chloroflexota</taxon>
        <taxon>Dehalococcoidia</taxon>
        <taxon>Dehalococcoidales</taxon>
        <taxon>Dehalococcoidaceae</taxon>
        <taxon>Dehalococcoides</taxon>
    </lineage>
</organism>
<accession>A5FQ13</accession>
<proteinExistence type="inferred from homology"/>
<evidence type="ECO:0000255" key="1">
    <source>
        <dbReference type="HAMAP-Rule" id="MF_00539"/>
    </source>
</evidence>
<evidence type="ECO:0000256" key="2">
    <source>
        <dbReference type="SAM" id="MobiDB-lite"/>
    </source>
</evidence>
<evidence type="ECO:0000305" key="3"/>
<name>RL27_DEHMB</name>
<dbReference type="EMBL" id="CP000688">
    <property type="protein sequence ID" value="ABQ17716.1"/>
    <property type="molecule type" value="Genomic_DNA"/>
</dbReference>
<dbReference type="SMR" id="A5FQ13"/>
<dbReference type="KEGG" id="deb:DehaBAV1_1137"/>
<dbReference type="PATRIC" id="fig|216389.18.peg.1200"/>
<dbReference type="HOGENOM" id="CLU_095424_4_1_0"/>
<dbReference type="GO" id="GO:1990904">
    <property type="term" value="C:ribonucleoprotein complex"/>
    <property type="evidence" value="ECO:0007669"/>
    <property type="project" value="UniProtKB-KW"/>
</dbReference>
<dbReference type="GO" id="GO:0005840">
    <property type="term" value="C:ribosome"/>
    <property type="evidence" value="ECO:0007669"/>
    <property type="project" value="UniProtKB-KW"/>
</dbReference>
<dbReference type="GO" id="GO:0003735">
    <property type="term" value="F:structural constituent of ribosome"/>
    <property type="evidence" value="ECO:0007669"/>
    <property type="project" value="InterPro"/>
</dbReference>
<dbReference type="GO" id="GO:0006412">
    <property type="term" value="P:translation"/>
    <property type="evidence" value="ECO:0007669"/>
    <property type="project" value="UniProtKB-UniRule"/>
</dbReference>
<dbReference type="FunFam" id="2.40.50.100:FF:000004">
    <property type="entry name" value="50S ribosomal protein L27"/>
    <property type="match status" value="1"/>
</dbReference>
<dbReference type="Gene3D" id="2.40.50.100">
    <property type="match status" value="1"/>
</dbReference>
<dbReference type="HAMAP" id="MF_00539">
    <property type="entry name" value="Ribosomal_bL27"/>
    <property type="match status" value="1"/>
</dbReference>
<dbReference type="InterPro" id="IPR001684">
    <property type="entry name" value="Ribosomal_bL27"/>
</dbReference>
<dbReference type="InterPro" id="IPR018261">
    <property type="entry name" value="Ribosomal_bL27_CS"/>
</dbReference>
<dbReference type="NCBIfam" id="TIGR00062">
    <property type="entry name" value="L27"/>
    <property type="match status" value="1"/>
</dbReference>
<dbReference type="PANTHER" id="PTHR15893:SF0">
    <property type="entry name" value="LARGE RIBOSOMAL SUBUNIT PROTEIN BL27M"/>
    <property type="match status" value="1"/>
</dbReference>
<dbReference type="PANTHER" id="PTHR15893">
    <property type="entry name" value="RIBOSOMAL PROTEIN L27"/>
    <property type="match status" value="1"/>
</dbReference>
<dbReference type="Pfam" id="PF01016">
    <property type="entry name" value="Ribosomal_L27"/>
    <property type="match status" value="1"/>
</dbReference>
<dbReference type="PRINTS" id="PR00063">
    <property type="entry name" value="RIBOSOMALL27"/>
</dbReference>
<dbReference type="SUPFAM" id="SSF110324">
    <property type="entry name" value="Ribosomal L27 protein-like"/>
    <property type="match status" value="1"/>
</dbReference>
<dbReference type="PROSITE" id="PS00831">
    <property type="entry name" value="RIBOSOMAL_L27"/>
    <property type="match status" value="1"/>
</dbReference>